<comment type="function">
    <text evidence="1">Component of the cytosolic iron-sulfur (Fe/S) protein assembly machinery. Required for maturation of extramitochondrial Fe/S proteins (By similarity).</text>
</comment>
<comment type="similarity">
    <text evidence="3">Belongs to the NARF family.</text>
</comment>
<accession>B3NKH7</accession>
<sequence>MSGLSRALQLTDIDDFITPSQMCIKPVKIDKAKSKTGAKIMIKDDSCFEESESGKKKLNKVEITLQDCLACSGCITSAEGVLITQQSQEELLRVLQENLTKKATEDWGNVRTIVFTIATQPLLSLAHRYQIGVEDSARHLAGYFRSLGADYVLSTKVADDIALLECRQEFVERYRENENLTMLSSSCPGWVCYAEKTHGNFILPYISTTRSPQQIMGVLVKHVFAEKLNVPASQIYHVTVMPCYDKKLEASREDFFSTANNSRDVDCVITSVEVEQLLSESQRTLAQYDPVDLDWPWSNVPPDFMVWAHEKTLSGGYAEHIFKFAAKELFNEVPRSELEFKQLKNRDFREIILKKNGNTVLKFAIANGFRNIQNLVHKLKRGKVSNYHFVEVMACPSGCINGGAQIRPTTGQHVRELTRKLEELYHNLPQSDPENSLTKLIYTDFLDGFQTEKSYELLHTRYHDVVSELSKSLNINW</sequence>
<protein>
    <recommendedName>
        <fullName>Probable cytosolic Fe-S cluster assembly factor GG21400</fullName>
    </recommendedName>
</protein>
<keyword id="KW-0004">4Fe-4S</keyword>
<keyword id="KW-0408">Iron</keyword>
<keyword id="KW-0411">Iron-sulfur</keyword>
<keyword id="KW-0479">Metal-binding</keyword>
<name>NARF_DROER</name>
<feature type="chain" id="PRO_0000383700" description="Probable cytosolic Fe-S cluster assembly factor GG21400">
    <location>
        <begin position="1"/>
        <end position="477"/>
    </location>
</feature>
<feature type="binding site" evidence="2">
    <location>
        <position position="23"/>
    </location>
    <ligand>
        <name>[4Fe-4S] cluster</name>
        <dbReference type="ChEBI" id="CHEBI:49883"/>
        <label>1</label>
    </ligand>
</feature>
<feature type="binding site" evidence="2">
    <location>
        <position position="68"/>
    </location>
    <ligand>
        <name>[4Fe-4S] cluster</name>
        <dbReference type="ChEBI" id="CHEBI:49883"/>
        <label>1</label>
    </ligand>
</feature>
<feature type="binding site" evidence="2">
    <location>
        <position position="71"/>
    </location>
    <ligand>
        <name>[4Fe-4S] cluster</name>
        <dbReference type="ChEBI" id="CHEBI:49883"/>
        <label>1</label>
    </ligand>
</feature>
<feature type="binding site" evidence="2">
    <location>
        <position position="74"/>
    </location>
    <ligand>
        <name>[4Fe-4S] cluster</name>
        <dbReference type="ChEBI" id="CHEBI:49883"/>
        <label>1</label>
    </ligand>
</feature>
<feature type="binding site" evidence="2">
    <location>
        <position position="187"/>
    </location>
    <ligand>
        <name>[4Fe-4S] cluster</name>
        <dbReference type="ChEBI" id="CHEBI:49883"/>
        <label>2</label>
    </ligand>
</feature>
<feature type="binding site" evidence="2">
    <location>
        <position position="243"/>
    </location>
    <ligand>
        <name>[4Fe-4S] cluster</name>
        <dbReference type="ChEBI" id="CHEBI:49883"/>
        <label>2</label>
    </ligand>
</feature>
<feature type="binding site" evidence="2">
    <location>
        <position position="395"/>
    </location>
    <ligand>
        <name>[4Fe-4S] cluster</name>
        <dbReference type="ChEBI" id="CHEBI:49883"/>
        <label>2</label>
    </ligand>
</feature>
<feature type="binding site" evidence="2">
    <location>
        <position position="399"/>
    </location>
    <ligand>
        <name>[4Fe-4S] cluster</name>
        <dbReference type="ChEBI" id="CHEBI:49883"/>
        <label>2</label>
    </ligand>
</feature>
<organism>
    <name type="scientific">Drosophila erecta</name>
    <name type="common">Fruit fly</name>
    <dbReference type="NCBI Taxonomy" id="7220"/>
    <lineage>
        <taxon>Eukaryota</taxon>
        <taxon>Metazoa</taxon>
        <taxon>Ecdysozoa</taxon>
        <taxon>Arthropoda</taxon>
        <taxon>Hexapoda</taxon>
        <taxon>Insecta</taxon>
        <taxon>Pterygota</taxon>
        <taxon>Neoptera</taxon>
        <taxon>Endopterygota</taxon>
        <taxon>Diptera</taxon>
        <taxon>Brachycera</taxon>
        <taxon>Muscomorpha</taxon>
        <taxon>Ephydroidea</taxon>
        <taxon>Drosophilidae</taxon>
        <taxon>Drosophila</taxon>
        <taxon>Sophophora</taxon>
    </lineage>
</organism>
<evidence type="ECO:0000250" key="1"/>
<evidence type="ECO:0000255" key="2"/>
<evidence type="ECO:0000305" key="3"/>
<reference key="1">
    <citation type="journal article" date="2007" name="Nature">
        <title>Evolution of genes and genomes on the Drosophila phylogeny.</title>
        <authorList>
            <consortium name="Drosophila 12 genomes consortium"/>
        </authorList>
    </citation>
    <scope>NUCLEOTIDE SEQUENCE [LARGE SCALE GENOMIC DNA]</scope>
    <source>
        <strain>Tucson 14021-0224.01</strain>
    </source>
</reference>
<proteinExistence type="inferred from homology"/>
<gene>
    <name type="ORF">GG21400</name>
</gene>
<dbReference type="EMBL" id="CH954179">
    <property type="protein sequence ID" value="EDV54281.1"/>
    <property type="molecule type" value="Genomic_DNA"/>
</dbReference>
<dbReference type="SMR" id="B3NKH7"/>
<dbReference type="EnsemblMetazoa" id="FBtr0141454">
    <property type="protein sequence ID" value="FBpp0139946"/>
    <property type="gene ID" value="FBgn0113579"/>
</dbReference>
<dbReference type="EnsemblMetazoa" id="XM_001973845.3">
    <property type="protein sequence ID" value="XP_001973881.1"/>
    <property type="gene ID" value="LOC6548517"/>
</dbReference>
<dbReference type="EnsemblMetazoa" id="XM_026982886.1">
    <property type="protein sequence ID" value="XP_026838687.1"/>
    <property type="gene ID" value="LOC6548517"/>
</dbReference>
<dbReference type="GeneID" id="6548517"/>
<dbReference type="KEGG" id="der:6548517"/>
<dbReference type="eggNOG" id="KOG2439">
    <property type="taxonomic scope" value="Eukaryota"/>
</dbReference>
<dbReference type="HOGENOM" id="CLU_018240_0_0_1"/>
<dbReference type="OMA" id="GYLHHVL"/>
<dbReference type="OrthoDB" id="10253113at2759"/>
<dbReference type="PhylomeDB" id="B3NKH7"/>
<dbReference type="Proteomes" id="UP000008711">
    <property type="component" value="Unassembled WGS sequence"/>
</dbReference>
<dbReference type="GO" id="GO:0051539">
    <property type="term" value="F:4 iron, 4 sulfur cluster binding"/>
    <property type="evidence" value="ECO:0007669"/>
    <property type="project" value="UniProtKB-KW"/>
</dbReference>
<dbReference type="GO" id="GO:0046872">
    <property type="term" value="F:metal ion binding"/>
    <property type="evidence" value="ECO:0007669"/>
    <property type="project" value="UniProtKB-KW"/>
</dbReference>
<dbReference type="GO" id="GO:0016226">
    <property type="term" value="P:iron-sulfur cluster assembly"/>
    <property type="evidence" value="ECO:0000250"/>
    <property type="project" value="UniProtKB"/>
</dbReference>
<dbReference type="FunFam" id="3.30.70.20:FF:000042">
    <property type="entry name" value="Cytosolic Fe-S cluster assembly factor NAR1"/>
    <property type="match status" value="1"/>
</dbReference>
<dbReference type="Gene3D" id="3.40.50.1780">
    <property type="match status" value="1"/>
</dbReference>
<dbReference type="Gene3D" id="3.40.950.10">
    <property type="entry name" value="Fe-only Hydrogenase (Larger Subunit), Chain L, domain 3"/>
    <property type="match status" value="1"/>
</dbReference>
<dbReference type="InterPro" id="IPR050340">
    <property type="entry name" value="Cytosolic_Fe-S_CAF"/>
</dbReference>
<dbReference type="InterPro" id="IPR009016">
    <property type="entry name" value="Fe_hydrogenase"/>
</dbReference>
<dbReference type="InterPro" id="IPR004108">
    <property type="entry name" value="Fe_hydrogenase_lsu_C"/>
</dbReference>
<dbReference type="InterPro" id="IPR003149">
    <property type="entry name" value="Fe_hydrogenase_ssu"/>
</dbReference>
<dbReference type="PANTHER" id="PTHR11615">
    <property type="entry name" value="NITRATE, FORMATE, IRON DEHYDROGENASE"/>
    <property type="match status" value="1"/>
</dbReference>
<dbReference type="Pfam" id="PF02906">
    <property type="entry name" value="Fe_hyd_lg_C"/>
    <property type="match status" value="1"/>
</dbReference>
<dbReference type="SMART" id="SM00902">
    <property type="entry name" value="Fe_hyd_SSU"/>
    <property type="match status" value="1"/>
</dbReference>
<dbReference type="SUPFAM" id="SSF53920">
    <property type="entry name" value="Fe-only hydrogenase"/>
    <property type="match status" value="1"/>
</dbReference>